<sequence>MKELARFSVTLPNELFDEINKRVKNTEYPSRSEFIRDLVREKIIADKWKDDSQSDAIAVLSIVYSHHQNNLVSQMLELEHHADVKIACSTHIHIDKENCLEMISLQGSGKNIEKFSQKIGSLKGVKFSNLARIGITKA</sequence>
<comment type="function">
    <text evidence="1">Transcriptional regulator.</text>
</comment>
<comment type="cofactor">
    <cofactor evidence="1">
        <name>Ni(2+)</name>
        <dbReference type="ChEBI" id="CHEBI:49786"/>
    </cofactor>
    <text evidence="1">Binds 1 nickel ion per subunit.</text>
</comment>
<comment type="similarity">
    <text evidence="1">Belongs to the transcriptional regulatory CopG/NikR family.</text>
</comment>
<accession>A7I1P3</accession>
<gene>
    <name type="ordered locus">CHAB381_0870</name>
</gene>
<feature type="chain" id="PRO_1000125809" description="Putative nickel-responsive regulator">
    <location>
        <begin position="1"/>
        <end position="138"/>
    </location>
</feature>
<feature type="binding site" evidence="1">
    <location>
        <position position="80"/>
    </location>
    <ligand>
        <name>Ni(2+)</name>
        <dbReference type="ChEBI" id="CHEBI:49786"/>
    </ligand>
</feature>
<feature type="binding site" evidence="1">
    <location>
        <position position="91"/>
    </location>
    <ligand>
        <name>Ni(2+)</name>
        <dbReference type="ChEBI" id="CHEBI:49786"/>
    </ligand>
</feature>
<feature type="binding site" evidence="1">
    <location>
        <position position="93"/>
    </location>
    <ligand>
        <name>Ni(2+)</name>
        <dbReference type="ChEBI" id="CHEBI:49786"/>
    </ligand>
</feature>
<feature type="binding site" evidence="1">
    <location>
        <position position="99"/>
    </location>
    <ligand>
        <name>Ni(2+)</name>
        <dbReference type="ChEBI" id="CHEBI:49786"/>
    </ligand>
</feature>
<organism>
    <name type="scientific">Campylobacter hominis (strain ATCC BAA-381 / DSM 21671 / CCUG 45161 / LMG 19568 / NCTC 13146 / CH001A)</name>
    <dbReference type="NCBI Taxonomy" id="360107"/>
    <lineage>
        <taxon>Bacteria</taxon>
        <taxon>Pseudomonadati</taxon>
        <taxon>Campylobacterota</taxon>
        <taxon>Epsilonproteobacteria</taxon>
        <taxon>Campylobacterales</taxon>
        <taxon>Campylobacteraceae</taxon>
        <taxon>Campylobacter</taxon>
    </lineage>
</organism>
<name>NIKR_CAMHC</name>
<protein>
    <recommendedName>
        <fullName evidence="1">Putative nickel-responsive regulator</fullName>
    </recommendedName>
</protein>
<proteinExistence type="inferred from homology"/>
<reference key="1">
    <citation type="submission" date="2007-07" db="EMBL/GenBank/DDBJ databases">
        <title>Complete genome sequence of Campylobacter hominis ATCC BAA-381, a commensal isolated from the human gastrointestinal tract.</title>
        <authorList>
            <person name="Fouts D.E."/>
            <person name="Mongodin E.F."/>
            <person name="Puiu D."/>
            <person name="Sebastian Y."/>
            <person name="Miller W.G."/>
            <person name="Mandrell R.E."/>
            <person name="Nelson K.E."/>
        </authorList>
    </citation>
    <scope>NUCLEOTIDE SEQUENCE [LARGE SCALE GENOMIC DNA]</scope>
    <source>
        <strain>ATCC BAA-381 / DSM 21671 / CCUG 45161 / LMG 19568 / NCTC 13146 / CH001A</strain>
    </source>
</reference>
<evidence type="ECO:0000255" key="1">
    <source>
        <dbReference type="HAMAP-Rule" id="MF_00476"/>
    </source>
</evidence>
<keyword id="KW-0238">DNA-binding</keyword>
<keyword id="KW-0479">Metal-binding</keyword>
<keyword id="KW-0533">Nickel</keyword>
<keyword id="KW-1185">Reference proteome</keyword>
<keyword id="KW-0804">Transcription</keyword>
<keyword id="KW-0805">Transcription regulation</keyword>
<dbReference type="EMBL" id="CP000776">
    <property type="protein sequence ID" value="ABS52425.1"/>
    <property type="molecule type" value="Genomic_DNA"/>
</dbReference>
<dbReference type="RefSeq" id="WP_012108725.1">
    <property type="nucleotide sequence ID" value="NC_009714.1"/>
</dbReference>
<dbReference type="SMR" id="A7I1P3"/>
<dbReference type="STRING" id="360107.CHAB381_0870"/>
<dbReference type="KEGG" id="cha:CHAB381_0870"/>
<dbReference type="eggNOG" id="COG0864">
    <property type="taxonomic scope" value="Bacteria"/>
</dbReference>
<dbReference type="HOGENOM" id="CLU_113319_1_2_7"/>
<dbReference type="OrthoDB" id="9806294at2"/>
<dbReference type="Proteomes" id="UP000002407">
    <property type="component" value="Chromosome"/>
</dbReference>
<dbReference type="GO" id="GO:0003677">
    <property type="term" value="F:DNA binding"/>
    <property type="evidence" value="ECO:0007669"/>
    <property type="project" value="UniProtKB-KW"/>
</dbReference>
<dbReference type="GO" id="GO:0003700">
    <property type="term" value="F:DNA-binding transcription factor activity"/>
    <property type="evidence" value="ECO:0007669"/>
    <property type="project" value="UniProtKB-UniRule"/>
</dbReference>
<dbReference type="GO" id="GO:0016151">
    <property type="term" value="F:nickel cation binding"/>
    <property type="evidence" value="ECO:0007669"/>
    <property type="project" value="UniProtKB-UniRule"/>
</dbReference>
<dbReference type="GO" id="GO:0010045">
    <property type="term" value="P:response to nickel cation"/>
    <property type="evidence" value="ECO:0007669"/>
    <property type="project" value="InterPro"/>
</dbReference>
<dbReference type="CDD" id="cd22231">
    <property type="entry name" value="RHH_NikR_HicB-like"/>
    <property type="match status" value="1"/>
</dbReference>
<dbReference type="Gene3D" id="3.30.70.1150">
    <property type="entry name" value="ACT-like. Chain A, domain 2"/>
    <property type="match status" value="1"/>
</dbReference>
<dbReference type="Gene3D" id="1.10.1220.10">
    <property type="entry name" value="Met repressor-like"/>
    <property type="match status" value="1"/>
</dbReference>
<dbReference type="HAMAP" id="MF_00476">
    <property type="entry name" value="NikR"/>
    <property type="match status" value="1"/>
</dbReference>
<dbReference type="InterPro" id="IPR027271">
    <property type="entry name" value="Acetolactate_synth/TF_NikR_C"/>
</dbReference>
<dbReference type="InterPro" id="IPR045865">
    <property type="entry name" value="ACT-like_dom_sf"/>
</dbReference>
<dbReference type="InterPro" id="IPR013321">
    <property type="entry name" value="Arc_rbn_hlx_hlx"/>
</dbReference>
<dbReference type="InterPro" id="IPR002145">
    <property type="entry name" value="CopG"/>
</dbReference>
<dbReference type="InterPro" id="IPR050192">
    <property type="entry name" value="CopG/NikR_regulator"/>
</dbReference>
<dbReference type="InterPro" id="IPR022988">
    <property type="entry name" value="Ni_resp_reg_NikR"/>
</dbReference>
<dbReference type="InterPro" id="IPR010985">
    <property type="entry name" value="Ribbon_hlx_hlx"/>
</dbReference>
<dbReference type="InterPro" id="IPR014864">
    <property type="entry name" value="TF_NikR_Ni-bd_C"/>
</dbReference>
<dbReference type="NCBIfam" id="NF001884">
    <property type="entry name" value="PRK00630.1"/>
    <property type="match status" value="1"/>
</dbReference>
<dbReference type="NCBIfam" id="NF002169">
    <property type="entry name" value="PRK01002.1"/>
    <property type="match status" value="1"/>
</dbReference>
<dbReference type="NCBIfam" id="NF002815">
    <property type="entry name" value="PRK02967.1"/>
    <property type="match status" value="1"/>
</dbReference>
<dbReference type="NCBIfam" id="NF003381">
    <property type="entry name" value="PRK04460.1"/>
    <property type="match status" value="1"/>
</dbReference>
<dbReference type="PANTHER" id="PTHR34719">
    <property type="entry name" value="NICKEL-RESPONSIVE REGULATOR"/>
    <property type="match status" value="1"/>
</dbReference>
<dbReference type="PANTHER" id="PTHR34719:SF2">
    <property type="entry name" value="NICKEL-RESPONSIVE REGULATOR"/>
    <property type="match status" value="1"/>
</dbReference>
<dbReference type="Pfam" id="PF08753">
    <property type="entry name" value="NikR_C"/>
    <property type="match status" value="1"/>
</dbReference>
<dbReference type="Pfam" id="PF01402">
    <property type="entry name" value="RHH_1"/>
    <property type="match status" value="1"/>
</dbReference>
<dbReference type="SUPFAM" id="SSF55021">
    <property type="entry name" value="ACT-like"/>
    <property type="match status" value="1"/>
</dbReference>
<dbReference type="SUPFAM" id="SSF47598">
    <property type="entry name" value="Ribbon-helix-helix"/>
    <property type="match status" value="1"/>
</dbReference>